<keyword id="KW-0067">ATP-binding</keyword>
<keyword id="KW-0315">Glutamine amidotransferase</keyword>
<keyword id="KW-0332">GMP biosynthesis</keyword>
<keyword id="KW-0436">Ligase</keyword>
<keyword id="KW-0547">Nucleotide-binding</keyword>
<keyword id="KW-0658">Purine biosynthesis</keyword>
<name>GUAAA_META3</name>
<reference key="1">
    <citation type="submission" date="2007-06" db="EMBL/GenBank/DDBJ databases">
        <title>Complete sequence of Methanococcus aeolicus Nankai-3.</title>
        <authorList>
            <consortium name="US DOE Joint Genome Institute"/>
            <person name="Copeland A."/>
            <person name="Lucas S."/>
            <person name="Lapidus A."/>
            <person name="Barry K."/>
            <person name="Glavina del Rio T."/>
            <person name="Dalin E."/>
            <person name="Tice H."/>
            <person name="Pitluck S."/>
            <person name="Chain P."/>
            <person name="Malfatti S."/>
            <person name="Shin M."/>
            <person name="Vergez L."/>
            <person name="Schmutz J."/>
            <person name="Larimer F."/>
            <person name="Land M."/>
            <person name="Hauser L."/>
            <person name="Kyrpides N."/>
            <person name="Lykidis A."/>
            <person name="Sieprawska-Lupa M."/>
            <person name="Whitman W.B."/>
            <person name="Richardson P."/>
        </authorList>
    </citation>
    <scope>NUCLEOTIDE SEQUENCE [LARGE SCALE GENOMIC DNA]</scope>
    <source>
        <strain>ATCC BAA-1280 / DSM 17508 / OCM 812 / Nankai-3</strain>
    </source>
</reference>
<sequence length="188" mass="20877">MIVILNNGGQYVHRIHRSLRYLKIPSKIIPNSTPLAEIEENKEIKGIILSGGPDIEKASNCLDIALNSKLPILGICLGHQIIAKAYGGEIGRAESEEYAHSKIFVKEENDLFKNVPKEFTAWASHKDEVVGAPLNFEILAYSNICEVEAMKHKEKPIYGVQFHPEVSHTENGAEILKNFCKVCGLLGE</sequence>
<organism>
    <name type="scientific">Methanococcus aeolicus (strain ATCC BAA-1280 / DSM 17508 / OCM 812 / Nankai-3)</name>
    <dbReference type="NCBI Taxonomy" id="419665"/>
    <lineage>
        <taxon>Archaea</taxon>
        <taxon>Methanobacteriati</taxon>
        <taxon>Methanobacteriota</taxon>
        <taxon>Methanomada group</taxon>
        <taxon>Methanococci</taxon>
        <taxon>Methanococcales</taxon>
        <taxon>Methanococcaceae</taxon>
        <taxon>Methanococcus</taxon>
    </lineage>
</organism>
<comment type="function">
    <text evidence="1">Catalyzes the synthesis of GMP from XMP.</text>
</comment>
<comment type="catalytic activity">
    <reaction evidence="1">
        <text>XMP + L-glutamine + ATP + H2O = GMP + L-glutamate + AMP + diphosphate + 2 H(+)</text>
        <dbReference type="Rhea" id="RHEA:11680"/>
        <dbReference type="ChEBI" id="CHEBI:15377"/>
        <dbReference type="ChEBI" id="CHEBI:15378"/>
        <dbReference type="ChEBI" id="CHEBI:29985"/>
        <dbReference type="ChEBI" id="CHEBI:30616"/>
        <dbReference type="ChEBI" id="CHEBI:33019"/>
        <dbReference type="ChEBI" id="CHEBI:57464"/>
        <dbReference type="ChEBI" id="CHEBI:58115"/>
        <dbReference type="ChEBI" id="CHEBI:58359"/>
        <dbReference type="ChEBI" id="CHEBI:456215"/>
        <dbReference type="EC" id="6.3.5.2"/>
    </reaction>
</comment>
<comment type="pathway">
    <text evidence="1">Purine metabolism; GMP biosynthesis; GMP from XMP (L-Gln route): step 1/1.</text>
</comment>
<comment type="subunit">
    <text evidence="1">Heterodimer composed of a glutamine amidotransferase subunit (A) and a GMP-binding subunit (B).</text>
</comment>
<accession>A6UVC9</accession>
<dbReference type="EC" id="6.3.5.2" evidence="1"/>
<dbReference type="EMBL" id="CP000743">
    <property type="protein sequence ID" value="ABR56451.1"/>
    <property type="molecule type" value="Genomic_DNA"/>
</dbReference>
<dbReference type="RefSeq" id="WP_011973583.1">
    <property type="nucleotide sequence ID" value="NC_009635.1"/>
</dbReference>
<dbReference type="SMR" id="A6UVC9"/>
<dbReference type="STRING" id="419665.Maeo_0869"/>
<dbReference type="GeneID" id="5326839"/>
<dbReference type="KEGG" id="mae:Maeo_0869"/>
<dbReference type="eggNOG" id="arCOG00087">
    <property type="taxonomic scope" value="Archaea"/>
</dbReference>
<dbReference type="HOGENOM" id="CLU_014340_1_4_2"/>
<dbReference type="OrthoDB" id="10772at2157"/>
<dbReference type="UniPathway" id="UPA00189">
    <property type="reaction ID" value="UER00296"/>
</dbReference>
<dbReference type="Proteomes" id="UP000001106">
    <property type="component" value="Chromosome"/>
</dbReference>
<dbReference type="GO" id="GO:0005829">
    <property type="term" value="C:cytosol"/>
    <property type="evidence" value="ECO:0007669"/>
    <property type="project" value="TreeGrafter"/>
</dbReference>
<dbReference type="GO" id="GO:0005524">
    <property type="term" value="F:ATP binding"/>
    <property type="evidence" value="ECO:0007669"/>
    <property type="project" value="UniProtKB-KW"/>
</dbReference>
<dbReference type="GO" id="GO:0003921">
    <property type="term" value="F:GMP synthase activity"/>
    <property type="evidence" value="ECO:0007669"/>
    <property type="project" value="TreeGrafter"/>
</dbReference>
<dbReference type="CDD" id="cd01742">
    <property type="entry name" value="GATase1_GMP_Synthase"/>
    <property type="match status" value="1"/>
</dbReference>
<dbReference type="FunFam" id="3.40.50.880:FF:000047">
    <property type="entry name" value="GMP synthase [glutamine-hydrolyzing] subunit A"/>
    <property type="match status" value="1"/>
</dbReference>
<dbReference type="Gene3D" id="3.40.50.880">
    <property type="match status" value="1"/>
</dbReference>
<dbReference type="HAMAP" id="MF_01510">
    <property type="entry name" value="GMP_synthase_A"/>
    <property type="match status" value="1"/>
</dbReference>
<dbReference type="InterPro" id="IPR029062">
    <property type="entry name" value="Class_I_gatase-like"/>
</dbReference>
<dbReference type="InterPro" id="IPR017926">
    <property type="entry name" value="GATASE"/>
</dbReference>
<dbReference type="InterPro" id="IPR004739">
    <property type="entry name" value="GMP_synth_GATase"/>
</dbReference>
<dbReference type="InterPro" id="IPR023686">
    <property type="entry name" value="GMP_synthase_A"/>
</dbReference>
<dbReference type="NCBIfam" id="TIGR00888">
    <property type="entry name" value="guaA_Nterm"/>
    <property type="match status" value="1"/>
</dbReference>
<dbReference type="NCBIfam" id="NF001975">
    <property type="entry name" value="PRK00758.1"/>
    <property type="match status" value="1"/>
</dbReference>
<dbReference type="PANTHER" id="PTHR11922:SF2">
    <property type="entry name" value="GMP SYNTHASE [GLUTAMINE-HYDROLYZING]"/>
    <property type="match status" value="1"/>
</dbReference>
<dbReference type="PANTHER" id="PTHR11922">
    <property type="entry name" value="GMP SYNTHASE-RELATED"/>
    <property type="match status" value="1"/>
</dbReference>
<dbReference type="Pfam" id="PF00117">
    <property type="entry name" value="GATase"/>
    <property type="match status" value="1"/>
</dbReference>
<dbReference type="PRINTS" id="PR00097">
    <property type="entry name" value="ANTSNTHASEII"/>
</dbReference>
<dbReference type="PRINTS" id="PR00096">
    <property type="entry name" value="GATASE"/>
</dbReference>
<dbReference type="SUPFAM" id="SSF52317">
    <property type="entry name" value="Class I glutamine amidotransferase-like"/>
    <property type="match status" value="1"/>
</dbReference>
<dbReference type="PROSITE" id="PS51273">
    <property type="entry name" value="GATASE_TYPE_1"/>
    <property type="match status" value="1"/>
</dbReference>
<proteinExistence type="inferred from homology"/>
<gene>
    <name evidence="1" type="primary">guaAA</name>
    <name type="ordered locus">Maeo_0869</name>
</gene>
<protein>
    <recommendedName>
        <fullName evidence="1">GMP synthase [glutamine-hydrolyzing] subunit A</fullName>
        <ecNumber evidence="1">6.3.5.2</ecNumber>
    </recommendedName>
    <alternativeName>
        <fullName evidence="1">Glutamine amidotransferase</fullName>
    </alternativeName>
</protein>
<feature type="chain" id="PRO_0000316093" description="GMP synthase [glutamine-hydrolyzing] subunit A">
    <location>
        <begin position="1"/>
        <end position="188"/>
    </location>
</feature>
<feature type="domain" description="Glutamine amidotransferase type-1" evidence="1">
    <location>
        <begin position="1"/>
        <end position="188"/>
    </location>
</feature>
<feature type="active site" description="Nucleophile" evidence="1">
    <location>
        <position position="76"/>
    </location>
</feature>
<feature type="active site" evidence="1">
    <location>
        <position position="163"/>
    </location>
</feature>
<feature type="active site" evidence="1">
    <location>
        <position position="165"/>
    </location>
</feature>
<evidence type="ECO:0000255" key="1">
    <source>
        <dbReference type="HAMAP-Rule" id="MF_01510"/>
    </source>
</evidence>